<accession>C7ZBE5</accession>
<name>SAN2_FUSV7</name>
<feature type="chain" id="PRO_0000450717" description="Aldo-keto reductase NECHADRAFT_45914">
    <location>
        <begin position="1"/>
        <end position="370"/>
    </location>
</feature>
<feature type="active site" description="Proton donor" evidence="2">
    <location>
        <position position="83"/>
    </location>
</feature>
<feature type="binding site" evidence="1">
    <location>
        <position position="78"/>
    </location>
    <ligand>
        <name>NADP(+)</name>
        <dbReference type="ChEBI" id="CHEBI:58349"/>
    </ligand>
</feature>
<feature type="binding site" evidence="2">
    <location>
        <position position="174"/>
    </location>
    <ligand>
        <name>substrate</name>
    </ligand>
</feature>
<feature type="binding site" evidence="1">
    <location>
        <begin position="204"/>
        <end position="205"/>
    </location>
    <ligand>
        <name>NADP(+)</name>
        <dbReference type="ChEBI" id="CHEBI:58349"/>
    </ligand>
</feature>
<feature type="binding site" evidence="1">
    <location>
        <position position="230"/>
    </location>
    <ligand>
        <name>NADP(+)</name>
        <dbReference type="ChEBI" id="CHEBI:58349"/>
    </ligand>
</feature>
<feature type="binding site" evidence="1">
    <location>
        <begin position="259"/>
        <end position="269"/>
    </location>
    <ligand>
        <name>NADP(+)</name>
        <dbReference type="ChEBI" id="CHEBI:58349"/>
    </ligand>
</feature>
<feature type="binding site" evidence="1">
    <location>
        <begin position="333"/>
        <end position="341"/>
    </location>
    <ligand>
        <name>NADP(+)</name>
        <dbReference type="ChEBI" id="CHEBI:58349"/>
    </ligand>
</feature>
<evidence type="ECO:0000250" key="1">
    <source>
        <dbReference type="UniProtKB" id="O43488"/>
    </source>
</evidence>
<evidence type="ECO:0000250" key="2">
    <source>
        <dbReference type="UniProtKB" id="Q8CG76"/>
    </source>
</evidence>
<evidence type="ECO:0000269" key="3">
    <source>
    </source>
</evidence>
<evidence type="ECO:0000303" key="4">
    <source>
    </source>
</evidence>
<evidence type="ECO:0000305" key="5"/>
<evidence type="ECO:0000305" key="6">
    <source>
    </source>
</evidence>
<keyword id="KW-0521">NADP</keyword>
<keyword id="KW-0560">Oxidoreductase</keyword>
<keyword id="KW-1185">Reference proteome</keyword>
<dbReference type="EC" id="1.1.1.-" evidence="6"/>
<dbReference type="EMBL" id="GG698914">
    <property type="protein sequence ID" value="EEU38724.1"/>
    <property type="molecule type" value="Genomic_DNA"/>
</dbReference>
<dbReference type="RefSeq" id="XP_003044437.1">
    <property type="nucleotide sequence ID" value="XM_003044391.1"/>
</dbReference>
<dbReference type="SMR" id="C7ZBE5"/>
<dbReference type="EnsemblFungi" id="NechaT45914">
    <property type="protein sequence ID" value="NechaP45914"/>
    <property type="gene ID" value="NechaG45914"/>
</dbReference>
<dbReference type="GeneID" id="9670749"/>
<dbReference type="KEGG" id="nhe:NECHADRAFT_45914"/>
<dbReference type="VEuPathDB" id="FungiDB:NECHADRAFT_45914"/>
<dbReference type="eggNOG" id="KOG1575">
    <property type="taxonomic scope" value="Eukaryota"/>
</dbReference>
<dbReference type="HOGENOM" id="CLU_023205_2_0_1"/>
<dbReference type="InParanoid" id="C7ZBE5"/>
<dbReference type="OMA" id="EREMIKY"/>
<dbReference type="OrthoDB" id="1720422at2759"/>
<dbReference type="Proteomes" id="UP000005206">
    <property type="component" value="Unassembled WGS sequence"/>
</dbReference>
<dbReference type="GO" id="GO:0016491">
    <property type="term" value="F:oxidoreductase activity"/>
    <property type="evidence" value="ECO:0007669"/>
    <property type="project" value="UniProtKB-KW"/>
</dbReference>
<dbReference type="CDD" id="cd19079">
    <property type="entry name" value="AKR_EcYajO-like"/>
    <property type="match status" value="1"/>
</dbReference>
<dbReference type="FunFam" id="3.20.20.100:FF:000004">
    <property type="entry name" value="Oxidoreductase, aldo/keto reductase"/>
    <property type="match status" value="1"/>
</dbReference>
<dbReference type="Gene3D" id="3.20.20.100">
    <property type="entry name" value="NADP-dependent oxidoreductase domain"/>
    <property type="match status" value="1"/>
</dbReference>
<dbReference type="InterPro" id="IPR050523">
    <property type="entry name" value="AKR_Detox_Biosynth"/>
</dbReference>
<dbReference type="InterPro" id="IPR023210">
    <property type="entry name" value="NADP_OxRdtase_dom"/>
</dbReference>
<dbReference type="InterPro" id="IPR036812">
    <property type="entry name" value="NADP_OxRdtase_dom_sf"/>
</dbReference>
<dbReference type="PANTHER" id="PTHR43364">
    <property type="entry name" value="NADH-SPECIFIC METHYLGLYOXAL REDUCTASE-RELATED"/>
    <property type="match status" value="1"/>
</dbReference>
<dbReference type="PANTHER" id="PTHR43364:SF9">
    <property type="entry name" value="OXIDOREDUCTASE"/>
    <property type="match status" value="1"/>
</dbReference>
<dbReference type="Pfam" id="PF00248">
    <property type="entry name" value="Aldo_ket_red"/>
    <property type="match status" value="1"/>
</dbReference>
<dbReference type="SUPFAM" id="SSF51430">
    <property type="entry name" value="NAD(P)-linked oxidoreductase"/>
    <property type="match status" value="1"/>
</dbReference>
<proteinExistence type="inferred from homology"/>
<sequence>MSKTSVDKLLRIPQSLRDSISRTRVDYRHLGNCGLRVSNPILGGLHIGNSRWLPWVLNEEDAMPILKAAYDRGINTWDTANVYSNGESEKVIAKALRKYNIPRSKVILMTKCYRVVCDSENFDPGSGVTMHHELADKSKDYVNQWGLSRAAIFNAVEASLERLGTHYIDIFQIHRFDPTVPIAETMSALNDLVKAGMVRYLGASSMWTYQFAAMQNLAHAKGWTKFVSMQNHYNLIYREEEREMIRYCNDTGVGLIPWAPLASGRLARRPSQQSVSIRASNSRNGSIYEADDSNTDKIVSRVEEIAVKRNWPMSHVALAWLNKRVTAPIIGFSTVQRIEEALAAVGKELSEDEERYLEELYAPRPIQGHS</sequence>
<organism>
    <name type="scientific">Fusarium vanettenii (strain ATCC MYA-4622 / CBS 123669 / FGSC 9596 / NRRL 45880 / 77-13-4)</name>
    <name type="common">Fusarium solani subsp. pisi</name>
    <dbReference type="NCBI Taxonomy" id="660122"/>
    <lineage>
        <taxon>Eukaryota</taxon>
        <taxon>Fungi</taxon>
        <taxon>Dikarya</taxon>
        <taxon>Ascomycota</taxon>
        <taxon>Pezizomycotina</taxon>
        <taxon>Sordariomycetes</taxon>
        <taxon>Hypocreomycetidae</taxon>
        <taxon>Hypocreales</taxon>
        <taxon>Nectriaceae</taxon>
        <taxon>Fusarium</taxon>
        <taxon>Fusarium solani species complex</taxon>
        <taxon>Fusarium vanettenii</taxon>
    </lineage>
</organism>
<comment type="function">
    <text evidence="3 6">Aldo-keto reductase; part of the gene cluster that mediates the biosynthesis of sansalvamide, a cyclic pentadepsipeptide that shows promising results as potential anti-cancer drug (PubMed:26936154). The nonribosmal peptide synthetase NRPS30 produces sansalvamide by incorporating successively one phenylalanine, one leucine, one alpha-hydroxyisocaproic acid (HICA), one valine and one leucine before sansalvamide is released from by cyclization by the terminal C domain of NRPS30 (PubMed:26936154). The HICA residue is probably provided by reduction of alpha-ketoisocaproate by the cluster-specific aldo-keto reductase (NECHADRAFT_45914) (Probable).</text>
</comment>
<comment type="pathway">
    <text evidence="6">Secondary metabolite biosynthesis.</text>
</comment>
<comment type="similarity">
    <text evidence="5">Belongs to the aldo/keto reductase family.</text>
</comment>
<protein>
    <recommendedName>
        <fullName evidence="4">Aldo-keto reductase NECHADRAFT_45914</fullName>
        <ecNumber evidence="6">1.1.1.-</ecNumber>
    </recommendedName>
    <alternativeName>
        <fullName evidence="4">Sansalvamide biosynthesis cluster protein NECHADRAFT_45914</fullName>
    </alternativeName>
</protein>
<gene>
    <name type="ORF">NECHADRAFT_45914</name>
</gene>
<reference key="1">
    <citation type="journal article" date="2009" name="PLoS Genet.">
        <title>The genome of Nectria haematococca: contribution of supernumerary chromosomes to gene expansion.</title>
        <authorList>
            <person name="Coleman J.J."/>
            <person name="Rounsley S.D."/>
            <person name="Rodriguez-Carres M."/>
            <person name="Kuo A."/>
            <person name="Wasmann C.C."/>
            <person name="Grimwood J."/>
            <person name="Schmutz J."/>
            <person name="Taga M."/>
            <person name="White G.J."/>
            <person name="Zhou S."/>
            <person name="Schwartz D.C."/>
            <person name="Freitag M."/>
            <person name="Ma L.-J."/>
            <person name="Danchin E.G.J."/>
            <person name="Henrissat B."/>
            <person name="Coutinho P.M."/>
            <person name="Nelson D.R."/>
            <person name="Straney D."/>
            <person name="Napoli C.A."/>
            <person name="Barker B.M."/>
            <person name="Gribskov M."/>
            <person name="Rep M."/>
            <person name="Kroken S."/>
            <person name="Molnar I."/>
            <person name="Rensing C."/>
            <person name="Kennell J.C."/>
            <person name="Zamora J."/>
            <person name="Farman M.L."/>
            <person name="Selker E.U."/>
            <person name="Salamov A."/>
            <person name="Shapiro H."/>
            <person name="Pangilinan J."/>
            <person name="Lindquist E."/>
            <person name="Lamers C."/>
            <person name="Grigoriev I.V."/>
            <person name="Geiser D.M."/>
            <person name="Covert S.F."/>
            <person name="Temporini E."/>
            <person name="VanEtten H.D."/>
        </authorList>
    </citation>
    <scope>NUCLEOTIDE SEQUENCE [LARGE SCALE GENOMIC DNA]</scope>
    <source>
        <strain>ATCC MYA-4622 / CBS 123669 / FGSC 9596 / NRRL 45880 / 77-13-4</strain>
    </source>
</reference>
<reference key="2">
    <citation type="journal article" date="2016" name="Curr. Genet.">
        <title>Identification of the non-ribosomal peptide synthetase responsible for biosynthesis of the potential anti-cancer drug sansalvamide in Fusarium solani.</title>
        <authorList>
            <person name="Romans-Fuertes P."/>
            <person name="Sondergaard T.E."/>
            <person name="Sandmann M.I."/>
            <person name="Wollenberg R.D."/>
            <person name="Nielsen K.F."/>
            <person name="Hansen F.T."/>
            <person name="Giese H."/>
            <person name="Brodersen D.E."/>
            <person name="Soerensen J.L."/>
        </authorList>
    </citation>
    <scope>FUNCTION</scope>
    <scope>PATHWAY</scope>
</reference>